<gene>
    <name evidence="4" type="primary">Or5g25</name>
    <name evidence="4" type="synonym">Mor175-2</name>
    <name evidence="4" type="synonym">Olfr1002</name>
</gene>
<proteinExistence type="inferred from homology"/>
<reference key="1">
    <citation type="journal article" date="2002" name="Nat. Neurosci.">
        <title>The olfactory receptor gene superfamily of the mouse.</title>
        <authorList>
            <person name="Zhang X."/>
            <person name="Firestein S."/>
        </authorList>
    </citation>
    <scope>NUCLEOTIDE SEQUENCE [GENOMIC DNA]</scope>
</reference>
<reference key="2">
    <citation type="journal article" date="2002" name="Hum. Mol. Genet.">
        <title>Different evolutionary processes shaped the mouse and human olfactory receptor gene families.</title>
        <authorList>
            <person name="Young J.M."/>
            <person name="Friedman C."/>
            <person name="Williams E.M."/>
            <person name="Ross J.A."/>
            <person name="Tonnes-Priddy L."/>
            <person name="Trask B.J."/>
        </authorList>
    </citation>
    <scope>NUCLEOTIDE SEQUENCE [GENOMIC DNA]</scope>
</reference>
<reference key="3">
    <citation type="journal article" date="2002" name="Hum. Mol. Genet.">
        <authorList>
            <person name="Young J.M."/>
            <person name="Friedman C."/>
            <person name="Williams E.M."/>
            <person name="Ross J.A."/>
            <person name="Tonnes-Priddy L."/>
            <person name="Trask B.J."/>
        </authorList>
    </citation>
    <scope>ERRATUM OF PUBMED:11875048</scope>
</reference>
<reference key="4">
    <citation type="journal article" date="2009" name="PLoS Biol.">
        <title>Lineage-specific biology revealed by a finished genome assembly of the mouse.</title>
        <authorList>
            <person name="Church D.M."/>
            <person name="Goodstadt L."/>
            <person name="Hillier L.W."/>
            <person name="Zody M.C."/>
            <person name="Goldstein S."/>
            <person name="She X."/>
            <person name="Bult C.J."/>
            <person name="Agarwala R."/>
            <person name="Cherry J.L."/>
            <person name="DiCuccio M."/>
            <person name="Hlavina W."/>
            <person name="Kapustin Y."/>
            <person name="Meric P."/>
            <person name="Maglott D."/>
            <person name="Birtle Z."/>
            <person name="Marques A.C."/>
            <person name="Graves T."/>
            <person name="Zhou S."/>
            <person name="Teague B."/>
            <person name="Potamousis K."/>
            <person name="Churas C."/>
            <person name="Place M."/>
            <person name="Herschleb J."/>
            <person name="Runnheim R."/>
            <person name="Forrest D."/>
            <person name="Amos-Landgraf J."/>
            <person name="Schwartz D.C."/>
            <person name="Cheng Z."/>
            <person name="Lindblad-Toh K."/>
            <person name="Eichler E.E."/>
            <person name="Ponting C.P."/>
        </authorList>
    </citation>
    <scope>NUCLEOTIDE SEQUENCE [LARGE SCALE GENOMIC DNA]</scope>
    <source>
        <strain>C57BL/6J</strain>
    </source>
</reference>
<accession>Q8VFK2</accession>
<accession>A2ALD0</accession>
<name>O5G25_MOUSE</name>
<keyword id="KW-1003">Cell membrane</keyword>
<keyword id="KW-1015">Disulfide bond</keyword>
<keyword id="KW-0297">G-protein coupled receptor</keyword>
<keyword id="KW-0325">Glycoprotein</keyword>
<keyword id="KW-0472">Membrane</keyword>
<keyword id="KW-0552">Olfaction</keyword>
<keyword id="KW-0675">Receptor</keyword>
<keyword id="KW-1185">Reference proteome</keyword>
<keyword id="KW-0716">Sensory transduction</keyword>
<keyword id="KW-0807">Transducer</keyword>
<keyword id="KW-0812">Transmembrane</keyword>
<keyword id="KW-1133">Transmembrane helix</keyword>
<comment type="function">
    <text>Potential odorant receptor.</text>
</comment>
<comment type="subcellular location">
    <subcellularLocation>
        <location>Cell membrane</location>
        <topology>Multi-pass membrane protein</topology>
    </subcellularLocation>
</comment>
<comment type="similarity">
    <text evidence="2">Belongs to the G-protein coupled receptor 1 family.</text>
</comment>
<sequence length="318" mass="35833">MMHRNQTVVTEFFFTGLTSSFHLQIVLFLTFLCVYLATLLGNLGMIILIHQDTRLHIPMYFFLSHLSFVDACSSSVISPKMLSDIFVDKKVISFLGCAIQFCLFSQFVVTECFLLASMAYDRYVAICKPLLYTLIMSQRVCVQLVIGPYSIGLISTVVHTTSAFILPYCGPNLINHFFCDLLPVLSLACADTQMNKHLLFIMAGILGVFSGIIILVSYVYIAITILKINSADGRRKAFSTCSSHLTAVSILYGTLFFIYVRPSSSFSLDINKVVSLFYTAVIPMLNPFIYSLRNKEVKDALIRTFEKKFCYSLQDKIL</sequence>
<dbReference type="EMBL" id="AY073524">
    <property type="protein sequence ID" value="AAL61187.1"/>
    <property type="molecule type" value="Genomic_DNA"/>
</dbReference>
<dbReference type="EMBL" id="AY318196">
    <property type="protein sequence ID" value="AAP71457.1"/>
    <property type="molecule type" value="Genomic_DNA"/>
</dbReference>
<dbReference type="EMBL" id="AL773585">
    <property type="status" value="NOT_ANNOTATED_CDS"/>
    <property type="molecule type" value="Genomic_DNA"/>
</dbReference>
<dbReference type="CCDS" id="CCDS16212.1"/>
<dbReference type="RefSeq" id="NP_666784.2">
    <property type="nucleotide sequence ID" value="NM_146573.2"/>
</dbReference>
<dbReference type="SMR" id="Q8VFK2"/>
<dbReference type="FunCoup" id="Q8VFK2">
    <property type="interactions" value="1147"/>
</dbReference>
<dbReference type="STRING" id="10090.ENSMUSP00000150405"/>
<dbReference type="GlyCosmos" id="Q8VFK2">
    <property type="glycosylation" value="1 site, No reported glycans"/>
</dbReference>
<dbReference type="GlyGen" id="Q8VFK2">
    <property type="glycosylation" value="1 site"/>
</dbReference>
<dbReference type="PhosphoSitePlus" id="Q8VFK2"/>
<dbReference type="PaxDb" id="10090-ENSMUSP00000097504"/>
<dbReference type="DNASU" id="258566"/>
<dbReference type="Ensembl" id="ENSMUST00000099920.2">
    <property type="protein sequence ID" value="ENSMUSP00000097504.2"/>
    <property type="gene ID" value="ENSMUSG00000075214.4"/>
</dbReference>
<dbReference type="Ensembl" id="ENSMUST00000215548.3">
    <property type="protein sequence ID" value="ENSMUSP00000150405.2"/>
    <property type="gene ID" value="ENSMUSG00000075214.4"/>
</dbReference>
<dbReference type="GeneID" id="258566"/>
<dbReference type="KEGG" id="mmu:258566"/>
<dbReference type="UCSC" id="uc008kkn.1">
    <property type="organism name" value="mouse"/>
</dbReference>
<dbReference type="AGR" id="MGI:3030836"/>
<dbReference type="CTD" id="258566"/>
<dbReference type="MGI" id="MGI:3030836">
    <property type="gene designation" value="Or5g25"/>
</dbReference>
<dbReference type="VEuPathDB" id="HostDB:ENSMUSG00000075214"/>
<dbReference type="eggNOG" id="ENOG502RF13">
    <property type="taxonomic scope" value="Eukaryota"/>
</dbReference>
<dbReference type="GeneTree" id="ENSGT01120000271831"/>
<dbReference type="HOGENOM" id="CLU_012526_1_0_1"/>
<dbReference type="InParanoid" id="Q8VFK2"/>
<dbReference type="OMA" id="TMTHTTF"/>
<dbReference type="OrthoDB" id="9823959at2759"/>
<dbReference type="PhylomeDB" id="Q8VFK2"/>
<dbReference type="TreeFam" id="TF352753"/>
<dbReference type="BioGRID-ORCS" id="258566">
    <property type="hits" value="0 hits in 50 CRISPR screens"/>
</dbReference>
<dbReference type="PRO" id="PR:Q8VFK2"/>
<dbReference type="Proteomes" id="UP000000589">
    <property type="component" value="Chromosome 2"/>
</dbReference>
<dbReference type="RNAct" id="Q8VFK2">
    <property type="molecule type" value="protein"/>
</dbReference>
<dbReference type="GO" id="GO:0016020">
    <property type="term" value="C:membrane"/>
    <property type="evidence" value="ECO:0000247"/>
    <property type="project" value="MGI"/>
</dbReference>
<dbReference type="GO" id="GO:0005886">
    <property type="term" value="C:plasma membrane"/>
    <property type="evidence" value="ECO:0007669"/>
    <property type="project" value="UniProtKB-SubCell"/>
</dbReference>
<dbReference type="GO" id="GO:0004930">
    <property type="term" value="F:G protein-coupled receptor activity"/>
    <property type="evidence" value="ECO:0007669"/>
    <property type="project" value="UniProtKB-KW"/>
</dbReference>
<dbReference type="GO" id="GO:0004984">
    <property type="term" value="F:olfactory receptor activity"/>
    <property type="evidence" value="ECO:0000247"/>
    <property type="project" value="MGI"/>
</dbReference>
<dbReference type="GO" id="GO:0007186">
    <property type="term" value="P:G protein-coupled receptor signaling pathway"/>
    <property type="evidence" value="ECO:0000247"/>
    <property type="project" value="MGI"/>
</dbReference>
<dbReference type="GO" id="GO:0007608">
    <property type="term" value="P:sensory perception of smell"/>
    <property type="evidence" value="ECO:0000247"/>
    <property type="project" value="MGI"/>
</dbReference>
<dbReference type="CDD" id="cd15414">
    <property type="entry name" value="7tmA_OR5G-like"/>
    <property type="match status" value="1"/>
</dbReference>
<dbReference type="FunFam" id="1.20.1070.10:FF:000003">
    <property type="entry name" value="Olfactory receptor"/>
    <property type="match status" value="1"/>
</dbReference>
<dbReference type="Gene3D" id="1.20.1070.10">
    <property type="entry name" value="Rhodopsin 7-helix transmembrane proteins"/>
    <property type="match status" value="1"/>
</dbReference>
<dbReference type="InterPro" id="IPR000276">
    <property type="entry name" value="GPCR_Rhodpsn"/>
</dbReference>
<dbReference type="InterPro" id="IPR017452">
    <property type="entry name" value="GPCR_Rhodpsn_7TM"/>
</dbReference>
<dbReference type="InterPro" id="IPR000725">
    <property type="entry name" value="Olfact_rcpt"/>
</dbReference>
<dbReference type="PANTHER" id="PTHR48018">
    <property type="entry name" value="OLFACTORY RECEPTOR"/>
    <property type="match status" value="1"/>
</dbReference>
<dbReference type="Pfam" id="PF13853">
    <property type="entry name" value="7tm_4"/>
    <property type="match status" value="1"/>
</dbReference>
<dbReference type="PRINTS" id="PR00237">
    <property type="entry name" value="GPCRRHODOPSN"/>
</dbReference>
<dbReference type="PRINTS" id="PR00245">
    <property type="entry name" value="OLFACTORYR"/>
</dbReference>
<dbReference type="SUPFAM" id="SSF81321">
    <property type="entry name" value="Family A G protein-coupled receptor-like"/>
    <property type="match status" value="1"/>
</dbReference>
<dbReference type="PROSITE" id="PS00237">
    <property type="entry name" value="G_PROTEIN_RECEP_F1_1"/>
    <property type="match status" value="1"/>
</dbReference>
<dbReference type="PROSITE" id="PS50262">
    <property type="entry name" value="G_PROTEIN_RECEP_F1_2"/>
    <property type="match status" value="1"/>
</dbReference>
<evidence type="ECO:0000255" key="1"/>
<evidence type="ECO:0000255" key="2">
    <source>
        <dbReference type="PROSITE-ProRule" id="PRU00521"/>
    </source>
</evidence>
<evidence type="ECO:0000305" key="3"/>
<evidence type="ECO:0000312" key="4">
    <source>
        <dbReference type="MGI" id="MGI:3030836"/>
    </source>
</evidence>
<organism>
    <name type="scientific">Mus musculus</name>
    <name type="common">Mouse</name>
    <dbReference type="NCBI Taxonomy" id="10090"/>
    <lineage>
        <taxon>Eukaryota</taxon>
        <taxon>Metazoa</taxon>
        <taxon>Chordata</taxon>
        <taxon>Craniata</taxon>
        <taxon>Vertebrata</taxon>
        <taxon>Euteleostomi</taxon>
        <taxon>Mammalia</taxon>
        <taxon>Eutheria</taxon>
        <taxon>Euarchontoglires</taxon>
        <taxon>Glires</taxon>
        <taxon>Rodentia</taxon>
        <taxon>Myomorpha</taxon>
        <taxon>Muroidea</taxon>
        <taxon>Muridae</taxon>
        <taxon>Murinae</taxon>
        <taxon>Mus</taxon>
        <taxon>Mus</taxon>
    </lineage>
</organism>
<feature type="chain" id="PRO_0000150858" description="Olfactory receptor 5G25">
    <location>
        <begin position="1"/>
        <end position="318"/>
    </location>
</feature>
<feature type="topological domain" description="Extracellular" evidence="1">
    <location>
        <begin position="1"/>
        <end position="25"/>
    </location>
</feature>
<feature type="transmembrane region" description="Helical; Name=1" evidence="1">
    <location>
        <begin position="26"/>
        <end position="46"/>
    </location>
</feature>
<feature type="topological domain" description="Cytoplasmic" evidence="1">
    <location>
        <begin position="47"/>
        <end position="54"/>
    </location>
</feature>
<feature type="transmembrane region" description="Helical; Name=2" evidence="1">
    <location>
        <begin position="55"/>
        <end position="75"/>
    </location>
</feature>
<feature type="topological domain" description="Extracellular" evidence="1">
    <location>
        <begin position="76"/>
        <end position="99"/>
    </location>
</feature>
<feature type="transmembrane region" description="Helical; Name=3" evidence="1">
    <location>
        <begin position="100"/>
        <end position="120"/>
    </location>
</feature>
<feature type="topological domain" description="Cytoplasmic" evidence="1">
    <location>
        <begin position="121"/>
        <end position="133"/>
    </location>
</feature>
<feature type="transmembrane region" description="Helical; Name=4" evidence="1">
    <location>
        <begin position="134"/>
        <end position="154"/>
    </location>
</feature>
<feature type="topological domain" description="Extracellular" evidence="1">
    <location>
        <begin position="155"/>
        <end position="196"/>
    </location>
</feature>
<feature type="transmembrane region" description="Helical; Name=5" evidence="1">
    <location>
        <begin position="197"/>
        <end position="217"/>
    </location>
</feature>
<feature type="topological domain" description="Cytoplasmic" evidence="1">
    <location>
        <begin position="218"/>
        <end position="237"/>
    </location>
</feature>
<feature type="transmembrane region" description="Helical; Name=6" evidence="1">
    <location>
        <begin position="238"/>
        <end position="258"/>
    </location>
</feature>
<feature type="topological domain" description="Extracellular" evidence="1">
    <location>
        <begin position="259"/>
        <end position="271"/>
    </location>
</feature>
<feature type="transmembrane region" description="Helical; Name=7" evidence="1">
    <location>
        <begin position="272"/>
        <end position="292"/>
    </location>
</feature>
<feature type="topological domain" description="Cytoplasmic" evidence="1">
    <location>
        <begin position="293"/>
        <end position="318"/>
    </location>
</feature>
<feature type="glycosylation site" description="N-linked (GlcNAc...) asparagine" evidence="1">
    <location>
        <position position="5"/>
    </location>
</feature>
<feature type="disulfide bond" evidence="2">
    <location>
        <begin position="97"/>
        <end position="189"/>
    </location>
</feature>
<feature type="sequence conflict" description="In Ref. 1; AAL61187." evidence="3" ref="1">
    <original>A</original>
    <variation>T</variation>
    <location>
        <position position="222"/>
    </location>
</feature>
<protein>
    <recommendedName>
        <fullName evidence="3">Olfactory receptor 5G25</fullName>
    </recommendedName>
    <alternativeName>
        <fullName>Olfactory receptor 1002</fullName>
    </alternativeName>
    <alternativeName>
        <fullName>Olfactory receptor 175-2</fullName>
    </alternativeName>
</protein>